<protein>
    <recommendedName>
        <fullName>Xylose isomerase</fullName>
        <ecNumber>5.3.1.5</ecNumber>
    </recommendedName>
</protein>
<feature type="chain" id="PRO_0000195779" description="Xylose isomerase">
    <location>
        <begin position="1"/>
        <end position="439"/>
    </location>
</feature>
<feature type="active site" evidence="1">
    <location>
        <position position="101"/>
    </location>
</feature>
<feature type="active site" evidence="1">
    <location>
        <position position="104"/>
    </location>
</feature>
<feature type="binding site" evidence="1">
    <location>
        <position position="232"/>
    </location>
    <ligand>
        <name>Mg(2+)</name>
        <dbReference type="ChEBI" id="CHEBI:18420"/>
        <label>1</label>
    </ligand>
</feature>
<feature type="binding site" evidence="1">
    <location>
        <position position="268"/>
    </location>
    <ligand>
        <name>Mg(2+)</name>
        <dbReference type="ChEBI" id="CHEBI:18420"/>
        <label>1</label>
    </ligand>
</feature>
<feature type="binding site" evidence="1">
    <location>
        <position position="268"/>
    </location>
    <ligand>
        <name>Mg(2+)</name>
        <dbReference type="ChEBI" id="CHEBI:18420"/>
        <label>2</label>
    </ligand>
</feature>
<feature type="binding site" evidence="1">
    <location>
        <position position="271"/>
    </location>
    <ligand>
        <name>Mg(2+)</name>
        <dbReference type="ChEBI" id="CHEBI:18420"/>
        <label>2</label>
    </ligand>
</feature>
<feature type="binding site" evidence="1">
    <location>
        <position position="296"/>
    </location>
    <ligand>
        <name>Mg(2+)</name>
        <dbReference type="ChEBI" id="CHEBI:18420"/>
        <label>1</label>
    </ligand>
</feature>
<feature type="binding site" evidence="1">
    <location>
        <position position="307"/>
    </location>
    <ligand>
        <name>Mg(2+)</name>
        <dbReference type="ChEBI" id="CHEBI:18420"/>
        <label>2</label>
    </ligand>
</feature>
<feature type="binding site" evidence="1">
    <location>
        <position position="309"/>
    </location>
    <ligand>
        <name>Mg(2+)</name>
        <dbReference type="ChEBI" id="CHEBI:18420"/>
        <label>2</label>
    </ligand>
</feature>
<feature type="binding site" evidence="1">
    <location>
        <position position="339"/>
    </location>
    <ligand>
        <name>Mg(2+)</name>
        <dbReference type="ChEBI" id="CHEBI:18420"/>
        <label>1</label>
    </ligand>
</feature>
<evidence type="ECO:0000250" key="1"/>
<evidence type="ECO:0000305" key="2"/>
<keyword id="KW-0119">Carbohydrate metabolism</keyword>
<keyword id="KW-0963">Cytoplasm</keyword>
<keyword id="KW-0413">Isomerase</keyword>
<keyword id="KW-0460">Magnesium</keyword>
<keyword id="KW-0479">Metal-binding</keyword>
<keyword id="KW-1185">Reference proteome</keyword>
<keyword id="KW-0859">Xylose metabolism</keyword>
<proteinExistence type="inferred from homology"/>
<sequence>MTTYFDKIEKISFEGEKSTNPFAFKHYDANQVILGKTMAEHLRLAVCYWHTFCWNGNDMFGLGSLERSWQKNSNLLAGAEQKADIAFEFLNKLGVPYYCFHDVDIAPEGNSVREYVQNFHHIVDILERKQVETGVKLLWGTANCFTNPRYMSGAATNPNPEVFAWAATQVFNAMNATQRLGGENYVLWGGREGYETLLNTDLKREREQIGRFMQMVVEHKHKIGFKGTLLIEPKPQEPTKHQYDYDVATVYGFLKQFGLEKEIKVNIEANHATLAGHTFQHEIATACALDIFGSIDANRGDPQLGWDTDQFPNSVEENTLVMYEILKHGGFTTGGFNFDAKIRRQSIDPYDLFYAHIGAIDVLALSLKRAAKMLQEETLQKIVNERYAGWNSELGQHILQGKTSLETLAQLVQQKDLAPKPVSGQQEYLENLVNQVIYS</sequence>
<gene>
    <name type="primary">xylA</name>
    <name type="ordered locus">HI_1112</name>
</gene>
<name>XYLA_HAEIN</name>
<dbReference type="EC" id="5.3.1.5"/>
<dbReference type="EMBL" id="L42023">
    <property type="protein sequence ID" value="AAC22766.1"/>
    <property type="molecule type" value="Genomic_DNA"/>
</dbReference>
<dbReference type="PIR" id="D64183">
    <property type="entry name" value="ISHIX"/>
</dbReference>
<dbReference type="RefSeq" id="NP_439269.1">
    <property type="nucleotide sequence ID" value="NC_000907.1"/>
</dbReference>
<dbReference type="SMR" id="P44398"/>
<dbReference type="STRING" id="71421.HI_1112"/>
<dbReference type="EnsemblBacteria" id="AAC22766">
    <property type="protein sequence ID" value="AAC22766"/>
    <property type="gene ID" value="HI_1112"/>
</dbReference>
<dbReference type="KEGG" id="hin:HI_1112"/>
<dbReference type="PATRIC" id="fig|71421.8.peg.1161"/>
<dbReference type="eggNOG" id="COG2115">
    <property type="taxonomic scope" value="Bacteria"/>
</dbReference>
<dbReference type="HOGENOM" id="CLU_037261_1_0_6"/>
<dbReference type="OrthoDB" id="9763981at2"/>
<dbReference type="PhylomeDB" id="P44398"/>
<dbReference type="BioCyc" id="HINF71421:G1GJ1-1147-MONOMER"/>
<dbReference type="Proteomes" id="UP000000579">
    <property type="component" value="Chromosome"/>
</dbReference>
<dbReference type="GO" id="GO:0005737">
    <property type="term" value="C:cytoplasm"/>
    <property type="evidence" value="ECO:0007669"/>
    <property type="project" value="UniProtKB-SubCell"/>
</dbReference>
<dbReference type="GO" id="GO:0000287">
    <property type="term" value="F:magnesium ion binding"/>
    <property type="evidence" value="ECO:0007669"/>
    <property type="project" value="UniProtKB-UniRule"/>
</dbReference>
<dbReference type="GO" id="GO:0009045">
    <property type="term" value="F:xylose isomerase activity"/>
    <property type="evidence" value="ECO:0000318"/>
    <property type="project" value="GO_Central"/>
</dbReference>
<dbReference type="GO" id="GO:0042843">
    <property type="term" value="P:D-xylose catabolic process"/>
    <property type="evidence" value="ECO:0000318"/>
    <property type="project" value="GO_Central"/>
</dbReference>
<dbReference type="FunFam" id="3.20.20.150:FF:000002">
    <property type="entry name" value="Xylose isomerase"/>
    <property type="match status" value="1"/>
</dbReference>
<dbReference type="Gene3D" id="3.20.20.150">
    <property type="entry name" value="Divalent-metal-dependent TIM barrel enzymes"/>
    <property type="match status" value="1"/>
</dbReference>
<dbReference type="HAMAP" id="MF_00455">
    <property type="entry name" value="Xylose_isom_A"/>
    <property type="match status" value="1"/>
</dbReference>
<dbReference type="InterPro" id="IPR036237">
    <property type="entry name" value="Xyl_isomerase-like_sf"/>
</dbReference>
<dbReference type="InterPro" id="IPR013452">
    <property type="entry name" value="Xylose_isom_bac"/>
</dbReference>
<dbReference type="InterPro" id="IPR001998">
    <property type="entry name" value="Xylose_isomerase"/>
</dbReference>
<dbReference type="NCBIfam" id="NF003998">
    <property type="entry name" value="PRK05474.1"/>
    <property type="match status" value="1"/>
</dbReference>
<dbReference type="NCBIfam" id="TIGR02630">
    <property type="entry name" value="xylose_isom_A"/>
    <property type="match status" value="1"/>
</dbReference>
<dbReference type="PANTHER" id="PTHR48408">
    <property type="match status" value="1"/>
</dbReference>
<dbReference type="PANTHER" id="PTHR48408:SF1">
    <property type="entry name" value="XYLOSE ISOMERASE"/>
    <property type="match status" value="1"/>
</dbReference>
<dbReference type="PRINTS" id="PR00688">
    <property type="entry name" value="XYLOSISMRASE"/>
</dbReference>
<dbReference type="SUPFAM" id="SSF51658">
    <property type="entry name" value="Xylose isomerase-like"/>
    <property type="match status" value="1"/>
</dbReference>
<dbReference type="PROSITE" id="PS51415">
    <property type="entry name" value="XYLOSE_ISOMERASE"/>
    <property type="match status" value="1"/>
</dbReference>
<reference key="1">
    <citation type="journal article" date="1995" name="Science">
        <title>Whole-genome random sequencing and assembly of Haemophilus influenzae Rd.</title>
        <authorList>
            <person name="Fleischmann R.D."/>
            <person name="Adams M.D."/>
            <person name="White O."/>
            <person name="Clayton R.A."/>
            <person name="Kirkness E.F."/>
            <person name="Kerlavage A.R."/>
            <person name="Bult C.J."/>
            <person name="Tomb J.-F."/>
            <person name="Dougherty B.A."/>
            <person name="Merrick J.M."/>
            <person name="McKenney K."/>
            <person name="Sutton G.G."/>
            <person name="FitzHugh W."/>
            <person name="Fields C.A."/>
            <person name="Gocayne J.D."/>
            <person name="Scott J.D."/>
            <person name="Shirley R."/>
            <person name="Liu L.-I."/>
            <person name="Glodek A."/>
            <person name="Kelley J.M."/>
            <person name="Weidman J.F."/>
            <person name="Phillips C.A."/>
            <person name="Spriggs T."/>
            <person name="Hedblom E."/>
            <person name="Cotton M.D."/>
            <person name="Utterback T.R."/>
            <person name="Hanna M.C."/>
            <person name="Nguyen D.T."/>
            <person name="Saudek D.M."/>
            <person name="Brandon R.C."/>
            <person name="Fine L.D."/>
            <person name="Fritchman J.L."/>
            <person name="Fuhrmann J.L."/>
            <person name="Geoghagen N.S.M."/>
            <person name="Gnehm C.L."/>
            <person name="McDonald L.A."/>
            <person name="Small K.V."/>
            <person name="Fraser C.M."/>
            <person name="Smith H.O."/>
            <person name="Venter J.C."/>
        </authorList>
    </citation>
    <scope>NUCLEOTIDE SEQUENCE [LARGE SCALE GENOMIC DNA]</scope>
    <source>
        <strain>ATCC 51907 / DSM 11121 / KW20 / Rd</strain>
    </source>
</reference>
<accession>P44398</accession>
<organism>
    <name type="scientific">Haemophilus influenzae (strain ATCC 51907 / DSM 11121 / KW20 / Rd)</name>
    <dbReference type="NCBI Taxonomy" id="71421"/>
    <lineage>
        <taxon>Bacteria</taxon>
        <taxon>Pseudomonadati</taxon>
        <taxon>Pseudomonadota</taxon>
        <taxon>Gammaproteobacteria</taxon>
        <taxon>Pasteurellales</taxon>
        <taxon>Pasteurellaceae</taxon>
        <taxon>Haemophilus</taxon>
    </lineage>
</organism>
<comment type="catalytic activity">
    <reaction>
        <text>alpha-D-xylose = alpha-D-xylulofuranose</text>
        <dbReference type="Rhea" id="RHEA:22816"/>
        <dbReference type="ChEBI" id="CHEBI:28518"/>
        <dbReference type="ChEBI" id="CHEBI:188998"/>
        <dbReference type="EC" id="5.3.1.5"/>
    </reaction>
</comment>
<comment type="cofactor">
    <cofactor evidence="1">
        <name>Mg(2+)</name>
        <dbReference type="ChEBI" id="CHEBI:18420"/>
    </cofactor>
    <text evidence="1">Binds 2 magnesium ions per subunit.</text>
</comment>
<comment type="subunit">
    <text evidence="1">Homotetramer.</text>
</comment>
<comment type="subcellular location">
    <subcellularLocation>
        <location evidence="1">Cytoplasm</location>
    </subcellularLocation>
</comment>
<comment type="similarity">
    <text evidence="2">Belongs to the xylose isomerase family.</text>
</comment>